<accession>P07231</accession>
<accession>O61475</accession>
<evidence type="ECO:0000255" key="1"/>
<evidence type="ECO:0000256" key="2">
    <source>
        <dbReference type="SAM" id="MobiDB-lite"/>
    </source>
</evidence>
<evidence type="ECO:0000269" key="3">
    <source>
    </source>
</evidence>
<evidence type="ECO:0000269" key="4">
    <source>
    </source>
</evidence>
<evidence type="ECO:0000269" key="5">
    <source>
    </source>
</evidence>
<evidence type="ECO:0000269" key="6">
    <source>
    </source>
</evidence>
<evidence type="ECO:0000269" key="7">
    <source>
    </source>
</evidence>
<evidence type="ECO:0000269" key="8">
    <source>
    </source>
</evidence>
<evidence type="ECO:0000303" key="9">
    <source>
    </source>
</evidence>
<evidence type="ECO:0000303" key="10">
    <source>
    </source>
</evidence>
<evidence type="ECO:0000305" key="11"/>
<evidence type="ECO:0000305" key="12">
    <source>
    </source>
</evidence>
<evidence type="ECO:0000312" key="13">
    <source>
        <dbReference type="PDB" id="2DPQ"/>
    </source>
</evidence>
<evidence type="ECO:0000312" key="14">
    <source>
        <dbReference type="PDB" id="2MZL"/>
    </source>
</evidence>
<evidence type="ECO:0007829" key="15">
    <source>
        <dbReference type="PDB" id="2DPQ"/>
    </source>
</evidence>
<keyword id="KW-0002">3D-structure</keyword>
<keyword id="KW-0027">Amidation</keyword>
<keyword id="KW-0106">Calcium</keyword>
<keyword id="KW-0165">Cleavage on pair of basic residues</keyword>
<keyword id="KW-0903">Direct protein sequencing</keyword>
<keyword id="KW-0301">Gamma-carboxyglutamic acid</keyword>
<keyword id="KW-0872">Ion channel impairing toxin</keyword>
<keyword id="KW-1028">Ionotropic glutamate receptor inhibitor</keyword>
<keyword id="KW-0460">Magnesium</keyword>
<keyword id="KW-0479">Metal-binding</keyword>
<keyword id="KW-0528">Neurotoxin</keyword>
<keyword id="KW-0582">Pharmaceutical</keyword>
<keyword id="KW-0629">Postsynaptic neurotoxin</keyword>
<keyword id="KW-0964">Secreted</keyword>
<keyword id="KW-0732">Signal</keyword>
<keyword id="KW-0800">Toxin</keyword>
<comment type="function">
    <text evidence="5">Conantokins inhibit N-methyl-D-aspartate (NMDA) receptors. This toxin is selective for the NR2B/GRIN2B subunit. Induces sleep-like symptoms in young mice and hyperactivity in older mice.</text>
</comment>
<comment type="cofactor">
    <cofactor evidence="3">
        <name>Ca(2+)</name>
        <dbReference type="ChEBI" id="CHEBI:29108"/>
    </cofactor>
    <cofactor evidence="3 6">
        <name>Mg(2+)</name>
        <dbReference type="ChEBI" id="CHEBI:18420"/>
    </cofactor>
    <text evidence="3 6">Divalent cations stabilize the toxin the in alpha-helix conformation.</text>
</comment>
<comment type="subcellular location">
    <subcellularLocation>
        <location evidence="7">Secreted</location>
    </subcellularLocation>
</comment>
<comment type="tissue specificity">
    <text evidence="12">Expressed by the venom duct.</text>
</comment>
<comment type="pharmaceutical">
    <text>Failed in phase II clinical trial. Was tested under the name CGX-1007 by Cognetix Inc. to treat convulsion and epilepsy.</text>
</comment>
<comment type="miscellaneous">
    <text evidence="6">The mutant Gln-89 consists of the addition of a proline residue which is hydroxylated (4-hydroxyproline).</text>
</comment>
<comment type="miscellaneous">
    <text evidence="11">The mature peptide does not contain cysteine residue.</text>
</comment>
<comment type="similarity">
    <text evidence="11">Belongs to the conotoxin B superfamily.</text>
</comment>
<protein>
    <recommendedName>
        <fullName evidence="10">Conantokin-G</fullName>
        <shortName evidence="10">Con-G</shortName>
    </recommendedName>
    <alternativeName>
        <fullName>CGX-1007</fullName>
    </alternativeName>
    <alternativeName>
        <fullName evidence="9">Conotoxin GV</fullName>
    </alternativeName>
    <alternativeName>
        <fullName evidence="9">Sleeper peptide</fullName>
    </alternativeName>
</protein>
<reference key="1">
    <citation type="journal article" date="1998" name="J. Biol. Chem.">
        <title>Conantokin-G precursor and its role in gamma-carboxylation by a vitamin K-dependent carboxylase from a Conus snail.</title>
        <authorList>
            <person name="Bandyopadhyay P.K."/>
            <person name="Colledge C.J."/>
            <person name="Walker C.S."/>
            <person name="Zhou L.-M."/>
            <person name="Hillyard D.R."/>
            <person name="Olivera B.M."/>
        </authorList>
    </citation>
    <scope>NUCLEOTIDE SEQUENCE [MRNA]</scope>
    <scope>VARIANT VAL-85</scope>
    <source>
        <tissue>Venom duct</tissue>
    </source>
</reference>
<reference key="2">
    <citation type="journal article" date="1984" name="J. Biol. Chem.">
        <title>Gamma-carboxyglutamate in a neuroactive toxin.</title>
        <authorList>
            <person name="McIntosh J.M."/>
            <person name="Olivera B.M."/>
            <person name="Cruz L.J."/>
            <person name="Gray W.R."/>
        </authorList>
    </citation>
    <scope>PROTEIN SEQUENCE OF 81-97</scope>
    <scope>AMIDATION AT ASN-97</scope>
    <scope>GAMMA-CARBOXYGLUTAMATION AT GLU-83; GLU-84; GLU-87; GLU-90 AND GLU-94</scope>
    <scope>SUBCELLULAR LOCATION</scope>
    <source>
        <tissue>Venom</tissue>
    </source>
</reference>
<reference key="3">
    <citation type="journal article" date="1990" name="Science">
        <title>Diversity of Conus neuropeptides.</title>
        <authorList>
            <person name="Olivera B.M."/>
            <person name="Rivier J."/>
            <person name="Clark C."/>
            <person name="Ramilo C.A."/>
            <person name="Corpuz G.P."/>
            <person name="Abogadie F.C."/>
            <person name="Mena E.E."/>
            <person name="Woodward S.R."/>
            <person name="Hillyard D.R."/>
            <person name="Cruz L.J."/>
        </authorList>
    </citation>
    <scope>FUNCTION</scope>
</reference>
<reference key="4">
    <citation type="journal article" date="2001" name="J. Biol. Chem.">
        <title>The amino acid residue at sequence position 5 in the conantokin peptides partially governs subunit-selective antagonism of recombinant N-methyl-D-aspartate receptors.</title>
        <authorList>
            <person name="Klein R.C."/>
            <person name="Prorok M."/>
            <person name="Galdzicki Z."/>
            <person name="Castellino F.J."/>
        </authorList>
    </citation>
    <scope>MUTAGENESIS OF LEU-85</scope>
    <scope>SITE</scope>
</reference>
<reference key="5">
    <citation type="journal article" date="1999" name="J. Pept. Res.">
        <title>Binding of cations to individual gamma-carboxyglutamate residues of conantokin-G and conantokin-T.</title>
        <authorList>
            <person name="Blandl T."/>
            <person name="Warder S.E."/>
            <person name="Prorok M."/>
            <person name="Castellino F.J."/>
        </authorList>
    </citation>
    <scope>METAL-BINDING SITES</scope>
    <scope>COFACTOR</scope>
</reference>
<reference key="6">
    <citation type="journal article" date="2003" name="Pain">
        <title>Powerful antinociceptive effects of the cone snail venom-derived subtype-selective NMDA receptor antagonists conantokins G and T.</title>
        <authorList>
            <person name="Malmberg A.B."/>
            <person name="Gilbert H."/>
            <person name="McCabe R.T."/>
            <person name="Basbaum A.I."/>
        </authorList>
    </citation>
    <scope>THERAPEUTIC USAGE</scope>
</reference>
<reference key="7">
    <citation type="journal article" date="1997" name="Biochemistry">
        <title>Three-dimensional structure of a gamma-carboxyglutamic acid-containing conotoxin, conantokin G, from the marine snail Conus geographus: the metal-free conformer.</title>
        <authorList>
            <person name="Rigby A.C."/>
            <person name="Baleja J.D."/>
            <person name="Furie B.C."/>
            <person name="Furie B."/>
        </authorList>
    </citation>
    <scope>STRUCTURE BY NMR OF 81-97</scope>
</reference>
<reference key="8">
    <citation type="journal article" date="1997" name="Biochemistry">
        <title>Role of gamma-carboxyglutamic acid in the calcium-induced structural transition of conantokin G, a conotoxin from the marine snail Conus geographus.</title>
        <authorList>
            <person name="Rigby A.C."/>
            <person name="Baleja J.D."/>
            <person name="Li L."/>
            <person name="Pedersen L.G."/>
            <person name="Furie B.C."/>
            <person name="Furie B."/>
        </authorList>
    </citation>
    <scope>STRUCTURE BY NMR OF 81-97</scope>
</reference>
<reference key="9">
    <citation type="journal article" date="1997" name="J. Biol. Chem.">
        <title>Determination of the solution structures of conantokin-G and conantokin-T by CD and NMR spectroscopy.</title>
        <authorList>
            <person name="Skjaerbaek N."/>
            <person name="Nielsen K.J."/>
            <person name="Lewis R.J."/>
            <person name="Alewood P.F."/>
            <person name="Craik D.J."/>
        </authorList>
    </citation>
    <scope>STRUCTURE BY NMR OF 81-97</scope>
</reference>
<reference key="10">
    <citation type="journal article" date="2015" name="J. Biol. Chem.">
        <title>Hydroxyproline-induced helical disruption in conantokin Rl-B affects subunit-selective antagonistic activities toward ion channels of N-methyl-D-aspartate receptors.</title>
        <authorList>
            <person name="Kunda S."/>
            <person name="Yuan Y."/>
            <person name="Balsara R.D."/>
            <person name="Zajicek J."/>
            <person name="Castellino F.J."/>
        </authorList>
    </citation>
    <scope>STRUCTURE BY NMR OF WILD-TYPE AND MUTANT CON-G</scope>
    <scope>MUTAGENESIS OF GLN-89</scope>
    <scope>COFACTOR</scope>
</reference>
<sequence length="100" mass="11267">MHLYTYLYLLVPLVTFHLILGTGTLDDGGALTERRSADATALKAEPVLLQKSAARSTDDNGKDRLTQMKRILKQRGNKARGEEELQENQELIREKSNGKR</sequence>
<dbReference type="EMBL" id="AF043141">
    <property type="protein sequence ID" value="AAC15669.1"/>
    <property type="molecule type" value="mRNA"/>
</dbReference>
<dbReference type="PIR" id="A05168">
    <property type="entry name" value="A05168"/>
</dbReference>
<dbReference type="PDB" id="1AD7">
    <property type="method" value="NMR"/>
    <property type="chains" value="A=81-97"/>
</dbReference>
<dbReference type="PDB" id="1AWY">
    <property type="method" value="NMR"/>
    <property type="chains" value="A=81-97"/>
</dbReference>
<dbReference type="PDB" id="1ONU">
    <property type="method" value="NMR"/>
    <property type="chains" value="A=81-97"/>
</dbReference>
<dbReference type="PDB" id="2DPQ">
    <property type="method" value="X-ray"/>
    <property type="resolution" value="1.25 A"/>
    <property type="chains" value="A=81-97"/>
</dbReference>
<dbReference type="PDB" id="2MZL">
    <property type="method" value="NMR"/>
    <property type="chains" value="A=81-97"/>
</dbReference>
<dbReference type="PDB" id="2MZM">
    <property type="method" value="NMR"/>
    <property type="chains" value="A=81-97"/>
</dbReference>
<dbReference type="PDBsum" id="1AD7"/>
<dbReference type="PDBsum" id="1AWY"/>
<dbReference type="PDBsum" id="1ONU"/>
<dbReference type="PDBsum" id="2DPQ"/>
<dbReference type="PDBsum" id="2MZL"/>
<dbReference type="PDBsum" id="2MZM"/>
<dbReference type="SMR" id="P07231"/>
<dbReference type="TCDB" id="8.B.35.1.1">
    <property type="family name" value="the conantokin (conantokin) family"/>
</dbReference>
<dbReference type="ConoServer" id="1373">
    <property type="toxin name" value="Conantokin-G precursor"/>
</dbReference>
<dbReference type="ConoServer" id="1353">
    <property type="toxin name" value="Conantokin-G precursor (variant)"/>
</dbReference>
<dbReference type="EvolutionaryTrace" id="P07231"/>
<dbReference type="GO" id="GO:0005576">
    <property type="term" value="C:extracellular region"/>
    <property type="evidence" value="ECO:0007669"/>
    <property type="project" value="UniProtKB-SubCell"/>
</dbReference>
<dbReference type="GO" id="GO:0035792">
    <property type="term" value="C:host cell postsynaptic membrane"/>
    <property type="evidence" value="ECO:0007669"/>
    <property type="project" value="UniProtKB-KW"/>
</dbReference>
<dbReference type="GO" id="GO:0099106">
    <property type="term" value="F:ion channel regulator activity"/>
    <property type="evidence" value="ECO:0007669"/>
    <property type="project" value="UniProtKB-KW"/>
</dbReference>
<dbReference type="GO" id="GO:0046872">
    <property type="term" value="F:metal ion binding"/>
    <property type="evidence" value="ECO:0007669"/>
    <property type="project" value="UniProtKB-KW"/>
</dbReference>
<dbReference type="GO" id="GO:0090729">
    <property type="term" value="F:toxin activity"/>
    <property type="evidence" value="ECO:0007669"/>
    <property type="project" value="UniProtKB-KW"/>
</dbReference>
<dbReference type="InterPro" id="IPR005918">
    <property type="entry name" value="Conantokin_CS"/>
</dbReference>
<dbReference type="PROSITE" id="PS60025">
    <property type="entry name" value="CONANTOKIN"/>
    <property type="match status" value="1"/>
</dbReference>
<proteinExistence type="evidence at protein level"/>
<feature type="signal peptide" evidence="1">
    <location>
        <begin position="1"/>
        <end position="21"/>
    </location>
</feature>
<feature type="propeptide" id="PRO_0000035060" evidence="7">
    <location>
        <begin position="22"/>
        <end position="80"/>
    </location>
</feature>
<feature type="peptide" id="PRO_0000035061" description="Conantokin-G" evidence="7">
    <location>
        <begin position="81"/>
        <end position="97"/>
    </location>
</feature>
<feature type="region of interest" description="Disordered" evidence="2">
    <location>
        <begin position="52"/>
        <end position="100"/>
    </location>
</feature>
<feature type="region of interest" description="Gamma-carboxylation recognition sequence that plays a role in the conversion of Glu to carboxy-Glu (Gla)" evidence="11">
    <location>
        <begin position="61"/>
        <end position="80"/>
    </location>
</feature>
<feature type="compositionally biased region" description="Basic and acidic residues" evidence="2">
    <location>
        <begin position="56"/>
        <end position="66"/>
    </location>
</feature>
<feature type="compositionally biased region" description="Basic and acidic residues" evidence="2">
    <location>
        <begin position="90"/>
        <end position="100"/>
    </location>
</feature>
<feature type="binding site" description="via 4-carboxyglutamate" evidence="3 6 13">
    <location>
        <position position="83"/>
    </location>
    <ligand>
        <name>a divalent metal cation</name>
        <dbReference type="ChEBI" id="CHEBI:60240"/>
    </ligand>
</feature>
<feature type="binding site" description="via 4-carboxyglutamate" evidence="3 6 13">
    <location>
        <position position="87"/>
    </location>
    <ligand>
        <name>a divalent metal cation</name>
        <dbReference type="ChEBI" id="CHEBI:60240"/>
    </ligand>
</feature>
<feature type="binding site" description="via 4-carboxyglutamate" evidence="3 6 13">
    <location>
        <position position="90"/>
    </location>
    <ligand>
        <name>a divalent metal cation</name>
        <dbReference type="ChEBI" id="CHEBI:60240"/>
    </ligand>
</feature>
<feature type="binding site" description="via 4-carboxyglutamate" evidence="3 6">
    <location>
        <position position="94"/>
    </location>
    <ligand>
        <name>a divalent metal cation</name>
        <dbReference type="ChEBI" id="CHEBI:60240"/>
    </ligand>
</feature>
<feature type="site" description="Important for selectivity">
    <location>
        <position position="85"/>
    </location>
</feature>
<feature type="modified residue" description="4-carboxyglutamate" evidence="7">
    <location>
        <position position="83"/>
    </location>
</feature>
<feature type="modified residue" description="4-carboxyglutamate" evidence="7">
    <location>
        <position position="84"/>
    </location>
</feature>
<feature type="modified residue" description="4-carboxyglutamate" evidence="7">
    <location>
        <position position="87"/>
    </location>
</feature>
<feature type="modified residue" description="4-carboxyglutamate" evidence="7">
    <location>
        <position position="90"/>
    </location>
</feature>
<feature type="modified residue" description="4-carboxyglutamate" evidence="7">
    <location>
        <position position="94"/>
    </location>
</feature>
<feature type="modified residue" description="Asparagine amide" evidence="7">
    <location>
        <position position="97"/>
    </location>
</feature>
<feature type="sequence variant" evidence="8">
    <original>L</original>
    <variation>V</variation>
    <location>
        <position position="85"/>
    </location>
</feature>
<feature type="mutagenesis site" description="No loss of inhibition of NR1a/NR2B receptor; no inhibition of NR1a/NR2A receptor (as for the wild-type)." evidence="4">
    <original>L</original>
    <variation>I</variation>
    <location>
        <position position="85"/>
    </location>
</feature>
<feature type="mutagenesis site" description="No loss of inhibition of NR1a/NR2B receptor; no inhibition of NR1a/NR2A receptor (as for the wild-type)." evidence="4">
    <original>L</original>
    <variation>V</variation>
    <location>
        <position position="85"/>
    </location>
</feature>
<feature type="mutagenesis site" description="Little loss of inhibition of NR1a/NR2B receptor; 70% of inhibition of NR1a/NR2A receptor." evidence="4">
    <original>L</original>
    <variation>Y</variation>
    <location>
        <position position="85"/>
    </location>
</feature>
<feature type="mutagenesis site" description="Loss of inhibition of NMDA receptors from mouse cortical neurons (the Pro is hydroxylated)." evidence="6 14">
    <original>Q</original>
    <variation>QP</variation>
    <location>
        <position position="89"/>
    </location>
</feature>
<feature type="helix" evidence="15">
    <location>
        <begin position="82"/>
        <end position="96"/>
    </location>
</feature>
<name>CKG_CONGE</name>
<organism>
    <name type="scientific">Conus geographus</name>
    <name type="common">Geography cone</name>
    <name type="synonym">Nubecula geographus</name>
    <dbReference type="NCBI Taxonomy" id="6491"/>
    <lineage>
        <taxon>Eukaryota</taxon>
        <taxon>Metazoa</taxon>
        <taxon>Spiralia</taxon>
        <taxon>Lophotrochozoa</taxon>
        <taxon>Mollusca</taxon>
        <taxon>Gastropoda</taxon>
        <taxon>Caenogastropoda</taxon>
        <taxon>Neogastropoda</taxon>
        <taxon>Conoidea</taxon>
        <taxon>Conidae</taxon>
        <taxon>Conus</taxon>
        <taxon>Gastridium</taxon>
    </lineage>
</organism>